<proteinExistence type="evidence at protein level"/>
<evidence type="ECO:0000269" key="1">
    <source>
    </source>
</evidence>
<evidence type="ECO:0000269" key="2">
    <source>
    </source>
</evidence>
<evidence type="ECO:0000269" key="3">
    <source>
    </source>
</evidence>
<evidence type="ECO:0000269" key="4">
    <source>
    </source>
</evidence>
<evidence type="ECO:0000269" key="5">
    <source>
    </source>
</evidence>
<evidence type="ECO:0000269" key="6">
    <source>
    </source>
</evidence>
<evidence type="ECO:0000305" key="7"/>
<evidence type="ECO:0007829" key="8">
    <source>
        <dbReference type="PDB" id="3BCY"/>
    </source>
</evidence>
<dbReference type="EMBL" id="U18813">
    <property type="protein sequence ID" value="AAB64603.1"/>
    <property type="molecule type" value="Genomic_DNA"/>
</dbReference>
<dbReference type="EMBL" id="AY692724">
    <property type="protein sequence ID" value="AAT92743.1"/>
    <property type="molecule type" value="Genomic_DNA"/>
</dbReference>
<dbReference type="EMBL" id="BK006939">
    <property type="protein sequence ID" value="DAA07726.1"/>
    <property type="molecule type" value="Genomic_DNA"/>
</dbReference>
<dbReference type="PIR" id="S50570">
    <property type="entry name" value="S50570"/>
</dbReference>
<dbReference type="RefSeq" id="NP_010990.1">
    <property type="nucleotide sequence ID" value="NM_001178958.1"/>
</dbReference>
<dbReference type="PDB" id="3BCY">
    <property type="method" value="X-ray"/>
    <property type="resolution" value="1.70 A"/>
    <property type="chains" value="A=11-161"/>
</dbReference>
<dbReference type="PDBsum" id="3BCY"/>
<dbReference type="SMR" id="P40043"/>
<dbReference type="BioGRID" id="36810">
    <property type="interactions" value="57"/>
</dbReference>
<dbReference type="DIP" id="DIP-5346N"/>
<dbReference type="FunCoup" id="P40043">
    <property type="interactions" value="91"/>
</dbReference>
<dbReference type="IntAct" id="P40043">
    <property type="interactions" value="5"/>
</dbReference>
<dbReference type="MINT" id="P40043"/>
<dbReference type="STRING" id="4932.YER067W"/>
<dbReference type="iPTMnet" id="P40043"/>
<dbReference type="PaxDb" id="4932-YER067W"/>
<dbReference type="PeptideAtlas" id="P40043"/>
<dbReference type="EnsemblFungi" id="YER067W_mRNA">
    <property type="protein sequence ID" value="YER067W"/>
    <property type="gene ID" value="YER067W"/>
</dbReference>
<dbReference type="GeneID" id="856797"/>
<dbReference type="KEGG" id="sce:YER067W"/>
<dbReference type="AGR" id="SGD:S000000869"/>
<dbReference type="SGD" id="S000000869">
    <property type="gene designation" value="RGI1"/>
</dbReference>
<dbReference type="VEuPathDB" id="FungiDB:YER067W"/>
<dbReference type="eggNOG" id="ENOG502RZ9F">
    <property type="taxonomic scope" value="Eukaryota"/>
</dbReference>
<dbReference type="GeneTree" id="ENSGT00940000176408"/>
<dbReference type="HOGENOM" id="CLU_118207_0_0_1"/>
<dbReference type="InParanoid" id="P40043"/>
<dbReference type="OMA" id="ANHYNAM"/>
<dbReference type="OrthoDB" id="4082176at2759"/>
<dbReference type="BioCyc" id="YEAST:G3O-30241-MONOMER"/>
<dbReference type="BioGRID-ORCS" id="856797">
    <property type="hits" value="0 hits in 10 CRISPR screens"/>
</dbReference>
<dbReference type="ChiTaRS" id="RGI1">
    <property type="organism name" value="yeast"/>
</dbReference>
<dbReference type="EvolutionaryTrace" id="P40043"/>
<dbReference type="PRO" id="PR:P40043"/>
<dbReference type="Proteomes" id="UP000002311">
    <property type="component" value="Chromosome V"/>
</dbReference>
<dbReference type="RNAct" id="P40043">
    <property type="molecule type" value="protein"/>
</dbReference>
<dbReference type="GO" id="GO:0071944">
    <property type="term" value="C:cell periphery"/>
    <property type="evidence" value="ECO:0000314"/>
    <property type="project" value="SGD"/>
</dbReference>
<dbReference type="GO" id="GO:0005737">
    <property type="term" value="C:cytoplasm"/>
    <property type="evidence" value="ECO:0007005"/>
    <property type="project" value="SGD"/>
</dbReference>
<dbReference type="GO" id="GO:0005634">
    <property type="term" value="C:nucleus"/>
    <property type="evidence" value="ECO:0007005"/>
    <property type="project" value="SGD"/>
</dbReference>
<dbReference type="GO" id="GO:0005886">
    <property type="term" value="C:plasma membrane"/>
    <property type="evidence" value="ECO:0007669"/>
    <property type="project" value="UniProtKB-SubCell"/>
</dbReference>
<dbReference type="GO" id="GO:0006112">
    <property type="term" value="P:energy reserve metabolic process"/>
    <property type="evidence" value="ECO:0000315"/>
    <property type="project" value="SGD"/>
</dbReference>
<dbReference type="FunFam" id="3.40.1000.40:FF:000001">
    <property type="entry name" value="Respiratory growth induced protein 2"/>
    <property type="match status" value="1"/>
</dbReference>
<dbReference type="Gene3D" id="3.40.1000.40">
    <property type="entry name" value="Respiratory growth induced protein 1"/>
    <property type="match status" value="1"/>
</dbReference>
<dbReference type="InterPro" id="IPR022554">
    <property type="entry name" value="RGI1"/>
</dbReference>
<dbReference type="InterPro" id="IPR038235">
    <property type="entry name" value="RGI1_sf"/>
</dbReference>
<dbReference type="Pfam" id="PF10843">
    <property type="entry name" value="RGI1"/>
    <property type="match status" value="1"/>
</dbReference>
<protein>
    <recommendedName>
        <fullName>Respiratory growth induced protein 1</fullName>
    </recommendedName>
</protein>
<organism>
    <name type="scientific">Saccharomyces cerevisiae (strain ATCC 204508 / S288c)</name>
    <name type="common">Baker's yeast</name>
    <dbReference type="NCBI Taxonomy" id="559292"/>
    <lineage>
        <taxon>Eukaryota</taxon>
        <taxon>Fungi</taxon>
        <taxon>Dikarya</taxon>
        <taxon>Ascomycota</taxon>
        <taxon>Saccharomycotina</taxon>
        <taxon>Saccharomycetes</taxon>
        <taxon>Saccharomycetales</taxon>
        <taxon>Saccharomycetaceae</taxon>
        <taxon>Saccharomyces</taxon>
    </lineage>
</organism>
<comment type="function">
    <text evidence="6">Involved in the control of energetic metabolism and significantly contribute to cell fitness, especially under respiratory growth conditions.</text>
</comment>
<comment type="subcellular location">
    <subcellularLocation>
        <location evidence="6">Cell membrane</location>
        <topology evidence="6">Peripheral membrane protein</topology>
    </subcellularLocation>
</comment>
<comment type="induction">
    <text evidence="1 4 5">Up-regulated by a wide range of conditions, such as intracellular iron depletion, carbon source restriction, high temperature, high osmotic stress, cold stress, unfolded protein response, and high hydrostatic pressure. The promoter contains several binding sites for the stress response transcription factors MSN2, MSN4 and HSF1. Down-regulated when treated with different antifungal drugs from the azole class.</text>
</comment>
<comment type="miscellaneous">
    <text evidence="3">Present with 8450 molecules/cell in log phase SD medium.</text>
</comment>
<comment type="similarity">
    <text evidence="7">Belongs to the RGI1 family.</text>
</comment>
<accession>P40043</accession>
<accession>D3DLX2</accession>
<name>RGI1_YEAST</name>
<reference key="1">
    <citation type="journal article" date="1997" name="Nature">
        <title>The nucleotide sequence of Saccharomyces cerevisiae chromosome V.</title>
        <authorList>
            <person name="Dietrich F.S."/>
            <person name="Mulligan J.T."/>
            <person name="Hennessy K.M."/>
            <person name="Yelton M.A."/>
            <person name="Allen E."/>
            <person name="Araujo R."/>
            <person name="Aviles E."/>
            <person name="Berno A."/>
            <person name="Brennan T."/>
            <person name="Carpenter J."/>
            <person name="Chen E."/>
            <person name="Cherry J.M."/>
            <person name="Chung E."/>
            <person name="Duncan M."/>
            <person name="Guzman E."/>
            <person name="Hartzell G."/>
            <person name="Hunicke-Smith S."/>
            <person name="Hyman R.W."/>
            <person name="Kayser A."/>
            <person name="Komp C."/>
            <person name="Lashkari D."/>
            <person name="Lew H."/>
            <person name="Lin D."/>
            <person name="Mosedale D."/>
            <person name="Nakahara K."/>
            <person name="Namath A."/>
            <person name="Norgren R."/>
            <person name="Oefner P."/>
            <person name="Oh C."/>
            <person name="Petel F.X."/>
            <person name="Roberts D."/>
            <person name="Sehl P."/>
            <person name="Schramm S."/>
            <person name="Shogren T."/>
            <person name="Smith V."/>
            <person name="Taylor P."/>
            <person name="Wei Y."/>
            <person name="Botstein D."/>
            <person name="Davis R.W."/>
        </authorList>
    </citation>
    <scope>NUCLEOTIDE SEQUENCE [LARGE SCALE GENOMIC DNA]</scope>
    <source>
        <strain>ATCC 204508 / S288c</strain>
    </source>
</reference>
<reference key="2">
    <citation type="journal article" date="2014" name="G3 (Bethesda)">
        <title>The reference genome sequence of Saccharomyces cerevisiae: Then and now.</title>
        <authorList>
            <person name="Engel S.R."/>
            <person name="Dietrich F.S."/>
            <person name="Fisk D.G."/>
            <person name="Binkley G."/>
            <person name="Balakrishnan R."/>
            <person name="Costanzo M.C."/>
            <person name="Dwight S.S."/>
            <person name="Hitz B.C."/>
            <person name="Karra K."/>
            <person name="Nash R.S."/>
            <person name="Weng S."/>
            <person name="Wong E.D."/>
            <person name="Lloyd P."/>
            <person name="Skrzypek M.S."/>
            <person name="Miyasato S.R."/>
            <person name="Simison M."/>
            <person name="Cherry J.M."/>
        </authorList>
    </citation>
    <scope>GENOME REANNOTATION</scope>
    <source>
        <strain>ATCC 204508 / S288c</strain>
    </source>
</reference>
<reference key="3">
    <citation type="journal article" date="2007" name="Genome Res.">
        <title>Approaching a complete repository of sequence-verified protein-encoding clones for Saccharomyces cerevisiae.</title>
        <authorList>
            <person name="Hu Y."/>
            <person name="Rolfs A."/>
            <person name="Bhullar B."/>
            <person name="Murthy T.V.S."/>
            <person name="Zhu C."/>
            <person name="Berger M.F."/>
            <person name="Camargo A.A."/>
            <person name="Kelley F."/>
            <person name="McCarron S."/>
            <person name="Jepson D."/>
            <person name="Richardson A."/>
            <person name="Raphael J."/>
            <person name="Moreira D."/>
            <person name="Taycher E."/>
            <person name="Zuo D."/>
            <person name="Mohr S."/>
            <person name="Kane M.F."/>
            <person name="Williamson J."/>
            <person name="Simpson A.J.G."/>
            <person name="Bulyk M.L."/>
            <person name="Harlow E."/>
            <person name="Marsischky G."/>
            <person name="Kolodner R.D."/>
            <person name="LaBaer J."/>
        </authorList>
    </citation>
    <scope>NUCLEOTIDE SEQUENCE [GENOMIC DNA]</scope>
    <source>
        <strain>ATCC 204508 / S288c</strain>
    </source>
</reference>
<reference key="4">
    <citation type="journal article" date="2000" name="Antimicrob. Agents Chemother.">
        <title>Genome-wide expression patterns in Saccharomyces cerevisiae: comparison of drug treatments and genetic alterations affecting biosynthesis of ergosterol.</title>
        <authorList>
            <person name="Bammert G.F."/>
            <person name="Fostel J.M."/>
        </authorList>
    </citation>
    <scope>INDUCTION</scope>
</reference>
<reference key="5">
    <citation type="journal article" date="2003" name="Nature">
        <title>Global analysis of protein expression in yeast.</title>
        <authorList>
            <person name="Ghaemmaghami S."/>
            <person name="Huh W.-K."/>
            <person name="Bower K."/>
            <person name="Howson R.W."/>
            <person name="Belle A."/>
            <person name="Dephoure N."/>
            <person name="O'Shea E.K."/>
            <person name="Weissman J.S."/>
        </authorList>
    </citation>
    <scope>LEVEL OF PROTEIN EXPRESSION [LARGE SCALE ANALYSIS]</scope>
</reference>
<reference key="6">
    <citation type="journal article" date="2003" name="Nat. Biotechnol.">
        <title>A proteomics approach to understanding protein ubiquitination.</title>
        <authorList>
            <person name="Peng J."/>
            <person name="Schwartz D."/>
            <person name="Elias J.E."/>
            <person name="Thoreen C.C."/>
            <person name="Cheng D."/>
            <person name="Marsischky G."/>
            <person name="Roelofs J."/>
            <person name="Finley D."/>
            <person name="Gygi S.P."/>
        </authorList>
    </citation>
    <scope>UBIQUITINATION [LARGE SCALE ANALYSIS] AT LYS-68</scope>
    <scope>IDENTIFICATION BY MASS SPECTROMETRY</scope>
    <source>
        <strain>SUB592</strain>
    </source>
</reference>
<reference key="7">
    <citation type="journal article" date="2005" name="Mol. Cell. Biol.">
        <title>Dynamical remodeling of the transcriptome during short-term anaerobiosis in Saccharomyces cerevisiae: differential response and role of Msn2 and/or Msn4 and other factors in galactose and glucose media.</title>
        <authorList>
            <person name="Lai L.C."/>
            <person name="Kosorukoff A.L."/>
            <person name="Burke P.V."/>
            <person name="Kwast K.E."/>
        </authorList>
    </citation>
    <scope>INDUCTION</scope>
</reference>
<reference key="8">
    <citation type="journal article" date="2008" name="J. Microbiol. Biotechnol.">
        <title>Proteomic analysis of recombinant Saccharomyces cerevisiae upon iron deficiency induced via human H-ferritin production.</title>
        <authorList>
            <person name="Seo H.Y."/>
            <person name="Chang Y.J."/>
            <person name="Chung Y.J."/>
            <person name="Kim K.S."/>
        </authorList>
    </citation>
    <scope>INDUCTION</scope>
</reference>
<reference key="9">
    <citation type="journal article" date="2010" name="PLoS ONE">
        <title>Structural and functional study of YER067W, a new protein involved in yeast metabolism control and drug resistance.</title>
        <authorList>
            <person name="Domitrovic T."/>
            <person name="Kozlov G."/>
            <person name="Freire J.C."/>
            <person name="Masuda C.A."/>
            <person name="da Silva Almeida M."/>
            <person name="Montero-Lomeli M."/>
            <person name="Atella G.C."/>
            <person name="Matta-Camacho E."/>
            <person name="Gehring K."/>
            <person name="Kurtenbach E."/>
        </authorList>
    </citation>
    <scope>X-RAY CRYSTALLOGRAPHY (1.7 ANGSTROMS) OF 11-161</scope>
    <scope>FUNCTION</scope>
    <scope>SUBCELLULAR LOCATION</scope>
</reference>
<gene>
    <name type="primary">RGI1</name>
    <name type="ordered locus">YER067W</name>
</gene>
<keyword id="KW-0002">3D-structure</keyword>
<keyword id="KW-1003">Cell membrane</keyword>
<keyword id="KW-1017">Isopeptide bond</keyword>
<keyword id="KW-0472">Membrane</keyword>
<keyword id="KW-1185">Reference proteome</keyword>
<keyword id="KW-0832">Ubl conjugation</keyword>
<sequence length="161" mass="18989">MTKKDKKEVKVQTVTTEDGETVKVFEDLQGFETFIANETEDDDFDHLHCKLNYYPPFVLHESHEDPEKISDAANSHSKKFVRHLHQHIEKHLLKDIKQAVRKPELKFHEKSKEETFDKITWHYGEETEYHGRPFKIDVQVVCTHEDAMVFVDYKTHPVGAN</sequence>
<feature type="chain" id="PRO_0000202633" description="Respiratory growth induced protein 1">
    <location>
        <begin position="1"/>
        <end position="161"/>
    </location>
</feature>
<feature type="cross-link" description="Glycyl lysine isopeptide (Lys-Gly) (interchain with G-Cter in ubiquitin)" evidence="2">
    <location>
        <position position="68"/>
    </location>
</feature>
<feature type="strand" evidence="8">
    <location>
        <begin position="17"/>
        <end position="27"/>
    </location>
</feature>
<feature type="helix" evidence="8">
    <location>
        <begin position="28"/>
        <end position="40"/>
    </location>
</feature>
<feature type="strand" evidence="8">
    <location>
        <begin position="48"/>
        <end position="53"/>
    </location>
</feature>
<feature type="helix" evidence="8">
    <location>
        <begin position="56"/>
        <end position="60"/>
    </location>
</feature>
<feature type="turn" evidence="8">
    <location>
        <begin position="61"/>
        <end position="64"/>
    </location>
</feature>
<feature type="helix" evidence="8">
    <location>
        <begin position="66"/>
        <end position="68"/>
    </location>
</feature>
<feature type="helix" evidence="8">
    <location>
        <begin position="78"/>
        <end position="90"/>
    </location>
</feature>
<feature type="helix" evidence="8">
    <location>
        <begin position="92"/>
        <end position="99"/>
    </location>
</feature>
<feature type="strand" evidence="8">
    <location>
        <begin position="108"/>
        <end position="114"/>
    </location>
</feature>
<feature type="strand" evidence="8">
    <location>
        <begin position="116"/>
        <end position="129"/>
    </location>
</feature>
<feature type="strand" evidence="8">
    <location>
        <begin position="132"/>
        <end position="145"/>
    </location>
</feature>
<feature type="strand" evidence="8">
    <location>
        <begin position="149"/>
        <end position="159"/>
    </location>
</feature>